<keyword id="KW-0256">Endoplasmic reticulum</keyword>
<keyword id="KW-0931">ER-Golgi transport</keyword>
<keyword id="KW-0333">Golgi apparatus</keyword>
<keyword id="KW-0472">Membrane</keyword>
<keyword id="KW-0962">Peroxisome biogenesis</keyword>
<keyword id="KW-0597">Phosphoprotein</keyword>
<keyword id="KW-0653">Protein transport</keyword>
<keyword id="KW-1185">Reference proteome</keyword>
<keyword id="KW-0813">Transport</keyword>
<sequence>MELWVPQTQGRTTGPSRDANRRLQSGHYRPRPHPQYSGDNYHQWQDTHKNSKPQQDPRDDHQQPHYVPRSGEWSQPVSGADYLKGSYPSHPYSRSGYEDPYQSYHTPTPRDEYAYGNYYYHGHPQLPQGERVARQGSPYIWHEDHRDQRHFSEHHWEKHNSTFEANSDTQFQFTSKNPYNDNPASAFGLEQPGEFFPESGAQKQKPSLTSKSNLLQQHESGLSSSSYELSQYMTEAPEQYEPMVSATWRPIQADDTSATVPKAPMRFYVPHVSVSFGPGGQLICVSPNSPADGQTALVEVHSMEVILNDFEDQEEMRAFPGPLIREDIHKVDIMTFCQKKAAQCLKSETPGSRDSALLWQLLVLLCRQNGSMVGSDIAELLMQDCKKLEKYKRQPPVANLINLTDEDWPVLSSGTRNLLTGEIPLNVDTPAQIVEKFTNLLYYGRKKEALEWAMKNHLWGHALFLASKMDPRTYNWVMSGFTTTLALNDPLQTLFQLMSGRIPQAATCCGDKQWGDWRPHLAVILSNQAGDAELYQRAIVSMGDTLAGKGLVEASHFCYLMAHVPFGHYTVKTDHLALVGSNHSQEFLKFATIEAIQRTEIFEYCQMLGRPKSFIPSFQVYKLLYASRLADYGLASQALHYCEAIGAAVLSEGGSSHPVLLAELIKLAEKLKLSDPLVLESRRGDRVLEPDWLVQLRRKHKELEQTRTGDLRDPDLTPSDIYGARGTTDTPYRDLYGQQNYSEDSEYSSALWPTSEQTSLTNPTPQQPFPLQRDTYSERDGPVHMGTPVPLYSVPATHLTVISGSSSGSGVAVTGAPGGRVGEEMLQKHPALGENTVPQEAVQDPDGLAVISSPQTPLAPRDRSFSEDSAISAKEDEEGTSDGADKPPHPDASQKEKLRDGKNTKSSGFGWFSWFRSKPASSVSTSGDEDSVDSSDSEESPRASPPHHASLGLSPTPPLSSPSLPGASTFPRGTGGNSLQGSSNSSGMAEGVGIGGFSGPQGVSSEFYSQPGALPPPPTLQGAVPLYNPSQVPQLPTASSLNRPNRLAQRRYPSQPC</sequence>
<name>SC16B_RAT</name>
<proteinExistence type="evidence at protein level"/>
<feature type="chain" id="PRO_0000341977" description="Protein transport protein Sec16B">
    <location>
        <begin position="1"/>
        <end position="1057"/>
    </location>
</feature>
<feature type="region of interest" description="Disordered" evidence="4">
    <location>
        <begin position="1"/>
        <end position="86"/>
    </location>
</feature>
<feature type="region of interest" description="Disordered" evidence="4">
    <location>
        <begin position="185"/>
        <end position="220"/>
    </location>
</feature>
<feature type="region of interest" description="Central conserved domain (CCD); required for localization to endoplasmic reticulum exit sites" evidence="3">
    <location>
        <begin position="263"/>
        <end position="708"/>
    </location>
</feature>
<feature type="region of interest" description="Disordered" evidence="4">
    <location>
        <begin position="704"/>
        <end position="778"/>
    </location>
</feature>
<feature type="region of interest" description="Disordered" evidence="4">
    <location>
        <begin position="849"/>
        <end position="1057"/>
    </location>
</feature>
<feature type="compositionally biased region" description="Polar residues" evidence="4">
    <location>
        <begin position="1"/>
        <end position="15"/>
    </location>
</feature>
<feature type="compositionally biased region" description="Basic and acidic residues" evidence="4">
    <location>
        <begin position="45"/>
        <end position="63"/>
    </location>
</feature>
<feature type="compositionally biased region" description="Polar residues" evidence="4">
    <location>
        <begin position="201"/>
        <end position="213"/>
    </location>
</feature>
<feature type="compositionally biased region" description="Basic and acidic residues" evidence="4">
    <location>
        <begin position="704"/>
        <end position="715"/>
    </location>
</feature>
<feature type="compositionally biased region" description="Polar residues" evidence="4">
    <location>
        <begin position="737"/>
        <end position="764"/>
    </location>
</feature>
<feature type="compositionally biased region" description="Basic and acidic residues" evidence="4">
    <location>
        <begin position="883"/>
        <end position="903"/>
    </location>
</feature>
<feature type="compositionally biased region" description="Low complexity" evidence="4">
    <location>
        <begin position="906"/>
        <end position="926"/>
    </location>
</feature>
<feature type="compositionally biased region" description="Acidic residues" evidence="4">
    <location>
        <begin position="927"/>
        <end position="938"/>
    </location>
</feature>
<feature type="compositionally biased region" description="Gly residues" evidence="4">
    <location>
        <begin position="990"/>
        <end position="999"/>
    </location>
</feature>
<feature type="compositionally biased region" description="Polar residues" evidence="4">
    <location>
        <begin position="1028"/>
        <end position="1043"/>
    </location>
</feature>
<feature type="modified residue" description="Phosphoserine" evidence="2">
    <location>
        <position position="70"/>
    </location>
</feature>
<feature type="modified residue" description="Phosphoserine" evidence="8">
    <location>
        <position position="137"/>
    </location>
</feature>
<feature type="modified residue" description="Phosphoserine" evidence="3">
    <location>
        <position position="161"/>
    </location>
</feature>
<feature type="modified residue" description="Phosphoserine" evidence="2">
    <location>
        <position position="185"/>
    </location>
</feature>
<feature type="modified residue" description="Phosphoserine" evidence="3">
    <location>
        <position position="245"/>
    </location>
</feature>
<feature type="modified residue" description="Phosphothreonine" evidence="3">
    <location>
        <position position="856"/>
    </location>
</feature>
<feature type="modified residue" description="Phosphoserine" evidence="8">
    <location>
        <position position="866"/>
    </location>
</feature>
<feature type="modified residue" description="Phosphoserine" evidence="8">
    <location>
        <position position="869"/>
    </location>
</feature>
<feature type="modified residue" description="Phosphoserine" evidence="8">
    <location>
        <position position="872"/>
    </location>
</feature>
<feature type="modified residue" description="Phosphoserine" evidence="2">
    <location>
        <position position="881"/>
    </location>
</feature>
<feature type="sequence conflict" description="In Ref. 1; BAB43905." evidence="7" ref="1">
    <original>P</original>
    <variation>L</variation>
    <location>
        <position position="15"/>
    </location>
</feature>
<feature type="sequence conflict" description="In Ref. 1; BAB43905." evidence="7" ref="1">
    <original>T</original>
    <variation>A</variation>
    <location>
        <position position="47"/>
    </location>
</feature>
<feature type="sequence conflict" description="In Ref. 1; BAB43905." evidence="7" ref="1">
    <original>Q</original>
    <variation>R</variation>
    <location>
        <position position="216"/>
    </location>
</feature>
<feature type="sequence conflict" description="In Ref. 1; BAB43905." evidence="7" ref="1">
    <original>L</original>
    <variation>P</variation>
    <location>
        <position position="425"/>
    </location>
</feature>
<feature type="sequence conflict" description="In Ref. 1; BAB43905." evidence="7" ref="1">
    <original>N</original>
    <variation>K</variation>
    <location>
        <position position="439"/>
    </location>
</feature>
<feature type="sequence conflict" description="In Ref. 1; BAB43905." evidence="7" ref="1">
    <original>G</original>
    <variation>R</variation>
    <location>
        <position position="726"/>
    </location>
</feature>
<feature type="sequence conflict" description="In Ref. 1; BAB43905." evidence="7" ref="1">
    <original>T</original>
    <variation>S</variation>
    <location>
        <position position="880"/>
    </location>
</feature>
<comment type="function">
    <text evidence="3">Plays a role in the organization of the endoplasmic reticulum exit sites (ERES), also known as transitional endoplasmic reticulum (tER). Required for secretory cargo traffic from the endoplasmic reticulum to the Golgi apparatus. Involved in peroxisome biogenesis. Regulates the transport of peroxisomal biogenesis factors PEX3 and PEX16 from the ER to peroxisomes.</text>
</comment>
<comment type="subunit">
    <text evidence="3">SEC16A and SEC16B are each present in multiple copies in a heteromeric complex. Interacts with TFG. Interacts with SEC13.</text>
</comment>
<comment type="subcellular location">
    <subcellularLocation>
        <location evidence="3">Endoplasmic reticulum membrane</location>
        <topology evidence="1">Peripheral membrane protein</topology>
    </subcellularLocation>
    <subcellularLocation>
        <location evidence="1">Golgi apparatus membrane</location>
        <topology evidence="1">Peripheral membrane protein</topology>
    </subcellularLocation>
    <text evidence="3">Localizes to endoplasmic reticulum exit sites (ERES), also known as transitional endoplasmic reticulum (tER).</text>
</comment>
<comment type="tissue specificity">
    <text evidence="5 6">Liver, kidney, heart, spleen and brain.</text>
</comment>
<comment type="induction">
    <text evidence="6">Stimulated by intracellular signaling factors.</text>
</comment>
<comment type="similarity">
    <text evidence="7">Belongs to the SEC16 family.</text>
</comment>
<comment type="sequence caution" evidence="7">
    <conflict type="frameshift">
        <sequence resource="EMBL-CDS" id="BAB43905"/>
    </conflict>
</comment>
<evidence type="ECO:0000250" key="1"/>
<evidence type="ECO:0000250" key="2">
    <source>
        <dbReference type="UniProtKB" id="Q91XT4"/>
    </source>
</evidence>
<evidence type="ECO:0000250" key="3">
    <source>
        <dbReference type="UniProtKB" id="Q96JE7"/>
    </source>
</evidence>
<evidence type="ECO:0000256" key="4">
    <source>
        <dbReference type="SAM" id="MobiDB-lite"/>
    </source>
</evidence>
<evidence type="ECO:0000269" key="5">
    <source>
    </source>
</evidence>
<evidence type="ECO:0000269" key="6">
    <source>
    </source>
</evidence>
<evidence type="ECO:0000305" key="7"/>
<evidence type="ECO:0007744" key="8">
    <source>
    </source>
</evidence>
<dbReference type="EMBL" id="AB060653">
    <property type="protein sequence ID" value="BAB43905.1"/>
    <property type="status" value="ALT_FRAME"/>
    <property type="molecule type" value="mRNA"/>
</dbReference>
<dbReference type="EMBL" id="AB178524">
    <property type="protein sequence ID" value="BAD18068.1"/>
    <property type="molecule type" value="Genomic_DNA"/>
</dbReference>
<dbReference type="RefSeq" id="NP_446023.2">
    <property type="nucleotide sequence ID" value="NM_053571.2"/>
</dbReference>
<dbReference type="RefSeq" id="XP_008767904.1">
    <property type="nucleotide sequence ID" value="XM_008769682.2"/>
</dbReference>
<dbReference type="RefSeq" id="XP_008767907.1">
    <property type="nucleotide sequence ID" value="XM_008769685.2"/>
</dbReference>
<dbReference type="RefSeq" id="XP_017454437.1">
    <property type="nucleotide sequence ID" value="XM_017598948.1"/>
</dbReference>
<dbReference type="RefSeq" id="XP_017454438.1">
    <property type="nucleotide sequence ID" value="XM_017598949.1"/>
</dbReference>
<dbReference type="RefSeq" id="XP_017454439.1">
    <property type="nucleotide sequence ID" value="XM_017598950.1"/>
</dbReference>
<dbReference type="RefSeq" id="XP_017454440.1">
    <property type="nucleotide sequence ID" value="XM_017598951.1"/>
</dbReference>
<dbReference type="RefSeq" id="XP_063128728.1">
    <property type="nucleotide sequence ID" value="XM_063272658.1"/>
</dbReference>
<dbReference type="RefSeq" id="XP_063128729.1">
    <property type="nucleotide sequence ID" value="XM_063272659.1"/>
</dbReference>
<dbReference type="SMR" id="Q75N33"/>
<dbReference type="FunCoup" id="Q75N33">
    <property type="interactions" value="262"/>
</dbReference>
<dbReference type="STRING" id="10116.ENSRNOP00000046286"/>
<dbReference type="GlyGen" id="Q75N33">
    <property type="glycosylation" value="1 site"/>
</dbReference>
<dbReference type="iPTMnet" id="Q75N33"/>
<dbReference type="PhosphoSitePlus" id="Q75N33"/>
<dbReference type="PaxDb" id="10116-ENSRNOP00000046286"/>
<dbReference type="Ensembl" id="ENSRNOT00000044008.6">
    <property type="protein sequence ID" value="ENSRNOP00000046286.3"/>
    <property type="gene ID" value="ENSRNOG00000005229.9"/>
</dbReference>
<dbReference type="GeneID" id="89868"/>
<dbReference type="KEGG" id="rno:89868"/>
<dbReference type="UCSC" id="RGD:621658">
    <property type="organism name" value="rat"/>
</dbReference>
<dbReference type="AGR" id="RGD:621658"/>
<dbReference type="CTD" id="89866"/>
<dbReference type="RGD" id="621658">
    <property type="gene designation" value="Sec16b"/>
</dbReference>
<dbReference type="eggNOG" id="KOG1913">
    <property type="taxonomic scope" value="Eukaryota"/>
</dbReference>
<dbReference type="GeneTree" id="ENSGT00940000160138"/>
<dbReference type="HOGENOM" id="CLU_010575_0_0_1"/>
<dbReference type="InParanoid" id="Q75N33"/>
<dbReference type="OMA" id="HPRDEGH"/>
<dbReference type="PhylomeDB" id="Q75N33"/>
<dbReference type="Reactome" id="R-RNO-204005">
    <property type="pathway name" value="COPII-mediated vesicle transport"/>
</dbReference>
<dbReference type="PRO" id="PR:Q75N33"/>
<dbReference type="Proteomes" id="UP000002494">
    <property type="component" value="Chromosome 13"/>
</dbReference>
<dbReference type="Bgee" id="ENSRNOG00000005229">
    <property type="expression patterns" value="Expressed in liver and 19 other cell types or tissues"/>
</dbReference>
<dbReference type="GO" id="GO:0070971">
    <property type="term" value="C:endoplasmic reticulum exit site"/>
    <property type="evidence" value="ECO:0000250"/>
    <property type="project" value="UniProtKB"/>
</dbReference>
<dbReference type="GO" id="GO:0005789">
    <property type="term" value="C:endoplasmic reticulum membrane"/>
    <property type="evidence" value="ECO:0007669"/>
    <property type="project" value="UniProtKB-SubCell"/>
</dbReference>
<dbReference type="GO" id="GO:0012507">
    <property type="term" value="C:ER to Golgi transport vesicle membrane"/>
    <property type="evidence" value="ECO:0000318"/>
    <property type="project" value="GO_Central"/>
</dbReference>
<dbReference type="GO" id="GO:0000139">
    <property type="term" value="C:Golgi membrane"/>
    <property type="evidence" value="ECO:0007669"/>
    <property type="project" value="UniProtKB-SubCell"/>
</dbReference>
<dbReference type="GO" id="GO:0043231">
    <property type="term" value="C:intracellular membrane-bounded organelle"/>
    <property type="evidence" value="ECO:0000266"/>
    <property type="project" value="RGD"/>
</dbReference>
<dbReference type="GO" id="GO:0007029">
    <property type="term" value="P:endoplasmic reticulum organization"/>
    <property type="evidence" value="ECO:0000266"/>
    <property type="project" value="RGD"/>
</dbReference>
<dbReference type="GO" id="GO:0006888">
    <property type="term" value="P:endoplasmic reticulum to Golgi vesicle-mediated transport"/>
    <property type="evidence" value="ECO:0000250"/>
    <property type="project" value="UniProtKB"/>
</dbReference>
<dbReference type="GO" id="GO:0007030">
    <property type="term" value="P:Golgi organization"/>
    <property type="evidence" value="ECO:0000318"/>
    <property type="project" value="GO_Central"/>
</dbReference>
<dbReference type="GO" id="GO:0016559">
    <property type="term" value="P:peroxisome fission"/>
    <property type="evidence" value="ECO:0000266"/>
    <property type="project" value="RGD"/>
</dbReference>
<dbReference type="GO" id="GO:0007031">
    <property type="term" value="P:peroxisome organization"/>
    <property type="evidence" value="ECO:0000266"/>
    <property type="project" value="RGD"/>
</dbReference>
<dbReference type="GO" id="GO:0010628">
    <property type="term" value="P:positive regulation of gene expression"/>
    <property type="evidence" value="ECO:0000266"/>
    <property type="project" value="RGD"/>
</dbReference>
<dbReference type="GO" id="GO:0070863">
    <property type="term" value="P:positive regulation of protein exit from endoplasmic reticulum"/>
    <property type="evidence" value="ECO:0000266"/>
    <property type="project" value="RGD"/>
</dbReference>
<dbReference type="GO" id="GO:0070973">
    <property type="term" value="P:protein localization to endoplasmic reticulum exit site"/>
    <property type="evidence" value="ECO:0000318"/>
    <property type="project" value="GO_Central"/>
</dbReference>
<dbReference type="GO" id="GO:0015031">
    <property type="term" value="P:protein transport"/>
    <property type="evidence" value="ECO:0007669"/>
    <property type="project" value="UniProtKB-KW"/>
</dbReference>
<dbReference type="CDD" id="cd09233">
    <property type="entry name" value="ACE1-Sec16-like"/>
    <property type="match status" value="1"/>
</dbReference>
<dbReference type="FunFam" id="1.25.40.1030:FF:000003">
    <property type="entry name" value="Protein transport protein sec16"/>
    <property type="match status" value="1"/>
</dbReference>
<dbReference type="Gene3D" id="1.25.40.1030">
    <property type="match status" value="1"/>
</dbReference>
<dbReference type="InterPro" id="IPR024340">
    <property type="entry name" value="Sec16_CCD"/>
</dbReference>
<dbReference type="InterPro" id="IPR024298">
    <property type="entry name" value="Sec16_Sec23-bd"/>
</dbReference>
<dbReference type="PANTHER" id="PTHR13402:SF11">
    <property type="entry name" value="PROTEIN TRANSPORT PROTEIN SEC16B"/>
    <property type="match status" value="1"/>
</dbReference>
<dbReference type="PANTHER" id="PTHR13402">
    <property type="entry name" value="RGPR-RELATED"/>
    <property type="match status" value="1"/>
</dbReference>
<dbReference type="Pfam" id="PF12932">
    <property type="entry name" value="Sec16"/>
    <property type="match status" value="1"/>
</dbReference>
<dbReference type="Pfam" id="PF12931">
    <property type="entry name" value="TPR_Sec16"/>
    <property type="match status" value="1"/>
</dbReference>
<accession>Q75N33</accession>
<accession>Q925T1</accession>
<organism>
    <name type="scientific">Rattus norvegicus</name>
    <name type="common">Rat</name>
    <dbReference type="NCBI Taxonomy" id="10116"/>
    <lineage>
        <taxon>Eukaryota</taxon>
        <taxon>Metazoa</taxon>
        <taxon>Chordata</taxon>
        <taxon>Craniata</taxon>
        <taxon>Vertebrata</taxon>
        <taxon>Euteleostomi</taxon>
        <taxon>Mammalia</taxon>
        <taxon>Eutheria</taxon>
        <taxon>Euarchontoglires</taxon>
        <taxon>Glires</taxon>
        <taxon>Rodentia</taxon>
        <taxon>Myomorpha</taxon>
        <taxon>Muroidea</taxon>
        <taxon>Muridae</taxon>
        <taxon>Murinae</taxon>
        <taxon>Rattus</taxon>
    </lineage>
</organism>
<protein>
    <recommendedName>
        <fullName>Protein transport protein Sec16B</fullName>
    </recommendedName>
    <alternativeName>
        <fullName>Leucine zipper transcription regulator 2</fullName>
    </alternativeName>
    <alternativeName>
        <fullName>Regucalcin gene promoter region-related protein p117</fullName>
        <shortName>RGPR-p117</shortName>
    </alternativeName>
    <alternativeName>
        <fullName>SEC16 homolog B</fullName>
    </alternativeName>
</protein>
<reference key="1">
    <citation type="journal article" date="2001" name="Int. J. Mol. Med.">
        <title>Molecular cloning and sequencing of the cDNA coding for a novel regucalcin gene promoter region-related protein in rat, mouse and human liver.</title>
        <authorList>
            <person name="Misawa H."/>
            <person name="Yamaguchi M."/>
        </authorList>
    </citation>
    <scope>NUCLEOTIDE SEQUENCE [MRNA]</scope>
    <scope>TISSUE SPECIFICITY</scope>
</reference>
<reference key="2">
    <citation type="submission" date="2004-04" db="EMBL/GenBank/DDBJ databases">
        <title>Rat regucalcin gene promoter region-related protein.</title>
        <authorList>
            <person name="Yamaguchi M."/>
            <person name="Sawada N."/>
            <person name="Murata T."/>
        </authorList>
    </citation>
    <scope>NUCLEOTIDE SEQUENCE [GENOMIC DNA]</scope>
</reference>
<reference key="3">
    <citation type="journal article" date="2002" name="J. Cell. Biochem.">
        <title>Gene expression for a novel protein RGPR-p117 in various species: the stimulation by intracellular signaling factors.</title>
        <authorList>
            <person name="Misawa H."/>
            <person name="Yamaguchi M."/>
        </authorList>
    </citation>
    <scope>TISSUE SPECIFICITY</scope>
    <scope>INDUCTION</scope>
</reference>
<reference key="4">
    <citation type="journal article" date="2012" name="Nat. Commun.">
        <title>Quantitative maps of protein phosphorylation sites across 14 different rat organs and tissues.</title>
        <authorList>
            <person name="Lundby A."/>
            <person name="Secher A."/>
            <person name="Lage K."/>
            <person name="Nordsborg N.B."/>
            <person name="Dmytriyev A."/>
            <person name="Lundby C."/>
            <person name="Olsen J.V."/>
        </authorList>
    </citation>
    <scope>PHOSPHORYLATION [LARGE SCALE ANALYSIS] AT SER-137; SER-866; SER-869 AND SER-872</scope>
    <scope>IDENTIFICATION BY MASS SPECTROMETRY [LARGE SCALE ANALYSIS]</scope>
</reference>
<gene>
    <name type="primary">Sec16b</name>
    <name type="synonym">Lztr2</name>
    <name type="synonym">Rgpr</name>
</gene>